<keyword id="KW-0165">Cleavage on pair of basic residues</keyword>
<keyword id="KW-1015">Disulfide bond</keyword>
<keyword id="KW-0872">Ion channel impairing toxin</keyword>
<keyword id="KW-0960">Knottin</keyword>
<keyword id="KW-0964">Secreted</keyword>
<keyword id="KW-0732">Signal</keyword>
<keyword id="KW-0800">Toxin</keyword>
<accession>A0A1D0BZF5</accession>
<evidence type="ECO:0000255" key="1"/>
<evidence type="ECO:0000269" key="2">
    <source>
    </source>
</evidence>
<evidence type="ECO:0000303" key="3">
    <source>
    </source>
</evidence>
<evidence type="ECO:0000305" key="4"/>
<evidence type="ECO:0000305" key="5">
    <source>
    </source>
</evidence>
<evidence type="ECO:0000312" key="6">
    <source>
        <dbReference type="EMBL" id="CDZ18843.1"/>
    </source>
</evidence>
<comment type="function">
    <text evidence="2">Weak insecticidal toxin with probable ion channel impairing activity. In vivo, induces paralysis when injected into sheep blowflies (L.cuprina). Shows weak toxicity, since it is only toxic at high doses, and flies recover within 24 hours.</text>
</comment>
<comment type="subcellular location">
    <subcellularLocation>
        <location evidence="2">Secreted</location>
    </subcellularLocation>
</comment>
<comment type="tissue specificity">
    <text evidence="5">Expressed by the venom gland.</text>
</comment>
<comment type="domain">
    <text evidence="5">The presence of a 'disulfide through disulfide knot' structurally defines this protein as a knottin.</text>
</comment>
<comment type="PTM">
    <text evidence="5">Contains 4 disulfide bonds.</text>
</comment>
<comment type="similarity">
    <text evidence="4">Belongs to the neurotoxin 25 family. F7 subfamily.</text>
</comment>
<organism>
    <name type="scientific">Hadronyche infensa</name>
    <name type="common">Fraser island funnel-web spider</name>
    <name type="synonym">Atrax infensus</name>
    <dbReference type="NCBI Taxonomy" id="153481"/>
    <lineage>
        <taxon>Eukaryota</taxon>
        <taxon>Metazoa</taxon>
        <taxon>Ecdysozoa</taxon>
        <taxon>Arthropoda</taxon>
        <taxon>Chelicerata</taxon>
        <taxon>Arachnida</taxon>
        <taxon>Araneae</taxon>
        <taxon>Mygalomorphae</taxon>
        <taxon>Hexathelidae</taxon>
        <taxon>Hadronyche</taxon>
    </lineage>
</organism>
<protein>
    <recommendedName>
        <fullName evidence="3">U3-hexatoxin-Hi1a</fullName>
        <shortName evidence="5">U3-HXTX-Hi1a</shortName>
    </recommendedName>
    <alternativeName>
        <fullName evidence="3">SF4 peptide</fullName>
    </alternativeName>
</protein>
<dbReference type="EMBL" id="HACE01000059">
    <property type="protein sequence ID" value="CDZ18843.1"/>
    <property type="molecule type" value="mRNA"/>
</dbReference>
<dbReference type="EMBL" id="HACE01000103">
    <property type="protein sequence ID" value="CDZ18887.1"/>
    <property type="molecule type" value="mRNA"/>
</dbReference>
<dbReference type="SMR" id="A0A1D0BZF5"/>
<dbReference type="GO" id="GO:0005576">
    <property type="term" value="C:extracellular region"/>
    <property type="evidence" value="ECO:0007669"/>
    <property type="project" value="UniProtKB-SubCell"/>
</dbReference>
<dbReference type="GO" id="GO:0099106">
    <property type="term" value="F:ion channel regulator activity"/>
    <property type="evidence" value="ECO:0007669"/>
    <property type="project" value="UniProtKB-KW"/>
</dbReference>
<dbReference type="GO" id="GO:0090729">
    <property type="term" value="F:toxin activity"/>
    <property type="evidence" value="ECO:0007669"/>
    <property type="project" value="UniProtKB-KW"/>
</dbReference>
<proteinExistence type="evidence at protein level"/>
<name>T31A_HADIN</name>
<sequence length="120" mass="12891">MKLLYFFVVITVLVAVAAALPAKTEEQIAAEENQLVEDLVQYAGTRLTRKRATRCSKKLGEKCNYHCECCGATVACSTVYVGGKETNFCSDKTSNNGALNTVGQGLNVVSNGLSAFQCWG</sequence>
<reference key="1">
    <citation type="journal article" date="2020" name="Proc. Natl. Acad. Sci. U.S.A.">
        <title>Structural venomics reveals evolution of a complex venom by duplication and diversification of an ancient peptide-encoding gene.</title>
        <authorList>
            <person name="Pineda S.S."/>
            <person name="Chin Y.K."/>
            <person name="Undheim E.A.B."/>
            <person name="Senff S."/>
            <person name="Mobli M."/>
            <person name="Dauly C."/>
            <person name="Escoubas P."/>
            <person name="Nicholson G.M."/>
            <person name="Kaas Q."/>
            <person name="Guo S."/>
            <person name="Herzig V."/>
            <person name="Mattick J.S."/>
            <person name="King G.F."/>
        </authorList>
    </citation>
    <scope>NUCLEOTIDE SEQUENCE [MRNA]</scope>
    <scope>IDENTIFICATION BY MASS SPECTROMETRY</scope>
    <scope>FUNCTION</scope>
    <scope>BIOASSAY</scope>
    <scope>RECOMBINANT EXPRESSION</scope>
    <scope>SUBCELLULAR LOCATION</scope>
    <source>
        <tissue>Venom</tissue>
        <tissue>Venom gland</tissue>
    </source>
</reference>
<reference evidence="6" key="2">
    <citation type="thesis" date="2012" institute="The University of Queensland" country="Australia">
        <title>Probing the chemical diversity of venom from the Australian Funnel-web spider Hadronyche infensa.</title>
        <authorList>
            <person name="Pineda S.S."/>
        </authorList>
    </citation>
    <scope>NUCLEOTIDE SEQUENCE [MRNA]</scope>
    <source>
        <tissue>Venom gland</tissue>
    </source>
</reference>
<reference evidence="6" key="3">
    <citation type="submission" date="2014-07" db="EMBL/GenBank/DDBJ databases">
        <authorList>
            <person name="Zhang J.E."/>
            <person name="Yang H."/>
            <person name="Guo J."/>
            <person name="Deng Z."/>
            <person name="Luo H."/>
            <person name="Luo M."/>
            <person name="Zhao B."/>
        </authorList>
    </citation>
    <scope>NUCLEOTIDE SEQUENCE [MRNA]</scope>
    <source>
        <tissue>Venom gland</tissue>
    </source>
</reference>
<feature type="signal peptide" evidence="1">
    <location>
        <begin position="1"/>
        <end position="19"/>
    </location>
</feature>
<feature type="propeptide" id="PRO_0000459665" evidence="5">
    <location>
        <begin position="20"/>
        <end position="51"/>
    </location>
</feature>
<feature type="chain" id="PRO_5014266692" description="U3-hexatoxin-Hi1a" evidence="5">
    <location>
        <begin position="52"/>
        <end position="120"/>
    </location>
</feature>